<dbReference type="EMBL" id="BC105880">
    <property type="protein sequence ID" value="AAI05881.1"/>
    <property type="status" value="ALT_INIT"/>
    <property type="molecule type" value="mRNA"/>
</dbReference>
<dbReference type="RefSeq" id="NP_001138613.1">
    <property type="nucleotide sequence ID" value="NM_001145141.1"/>
</dbReference>
<dbReference type="SMR" id="Q3KR64"/>
<dbReference type="STRING" id="10116.ENSRNOP00000006510"/>
<dbReference type="iPTMnet" id="Q3KR64"/>
<dbReference type="PhosphoSitePlus" id="Q3KR64"/>
<dbReference type="PaxDb" id="10116-ENSRNOP00000006510"/>
<dbReference type="Ensembl" id="ENSRNOT00000006510.6">
    <property type="protein sequence ID" value="ENSRNOP00000006510.4"/>
    <property type="gene ID" value="ENSRNOG00000004914.6"/>
</dbReference>
<dbReference type="GeneID" id="500876"/>
<dbReference type="KEGG" id="rno:500876"/>
<dbReference type="UCSC" id="RGD:1564901">
    <property type="organism name" value="rat"/>
</dbReference>
<dbReference type="AGR" id="RGD:1564901"/>
<dbReference type="CTD" id="500876"/>
<dbReference type="RGD" id="1564901">
    <property type="gene designation" value="LOC500876"/>
</dbReference>
<dbReference type="eggNOG" id="KOG3544">
    <property type="taxonomic scope" value="Eukaryota"/>
</dbReference>
<dbReference type="GeneTree" id="ENSGT00390000015252"/>
<dbReference type="HOGENOM" id="CLU_037026_1_0_1"/>
<dbReference type="InParanoid" id="Q3KR64"/>
<dbReference type="OMA" id="ALNPCPG"/>
<dbReference type="OrthoDB" id="86535at9989"/>
<dbReference type="PhylomeDB" id="Q3KR64"/>
<dbReference type="TreeFam" id="TF339260"/>
<dbReference type="PRO" id="PR:Q3KR64"/>
<dbReference type="Proteomes" id="UP000002494">
    <property type="component" value="Chromosome 7"/>
</dbReference>
<dbReference type="Bgee" id="ENSRNOG00000004914">
    <property type="expression patterns" value="Expressed in testis"/>
</dbReference>
<dbReference type="InterPro" id="IPR027822">
    <property type="entry name" value="DUF4641"/>
</dbReference>
<dbReference type="PANTHER" id="PTHR31866:SF4">
    <property type="match status" value="1"/>
</dbReference>
<dbReference type="PANTHER" id="PTHR31866">
    <property type="entry name" value="GENE 4779-RELATED"/>
    <property type="match status" value="1"/>
</dbReference>
<dbReference type="Pfam" id="PF15483">
    <property type="entry name" value="DUF4641"/>
    <property type="match status" value="1"/>
</dbReference>
<organism>
    <name type="scientific">Rattus norvegicus</name>
    <name type="common">Rat</name>
    <dbReference type="NCBI Taxonomy" id="10116"/>
    <lineage>
        <taxon>Eukaryota</taxon>
        <taxon>Metazoa</taxon>
        <taxon>Chordata</taxon>
        <taxon>Craniata</taxon>
        <taxon>Vertebrata</taxon>
        <taxon>Euteleostomi</taxon>
        <taxon>Mammalia</taxon>
        <taxon>Eutheria</taxon>
        <taxon>Euarchontoglires</taxon>
        <taxon>Glires</taxon>
        <taxon>Rodentia</taxon>
        <taxon>Myomorpha</taxon>
        <taxon>Muroidea</taxon>
        <taxon>Muridae</taxon>
        <taxon>Murinae</taxon>
        <taxon>Rattus</taxon>
    </lineage>
</organism>
<name>CX049_RAT</name>
<sequence>MGSPEEQSVPGDDFNEESTDPNKNLSLVSGPADSNEGEIRLPSPKGSNLPLVSQQDTSEAPSVVLWTGGCWPDSLVSEEERLGSPEDEKMDGLDFLSQPSVETEQQVANPETPGAKEQPSSESFCAETETGSNRRAPQASGSEEAKAASAATFLPKGLEQSRAWVSPRKSTTSRMLISENVHHPPSEPELSEELNEVQMMRVTICLKDGNHGNQAKNSGPAETGDLARHSNVQTRESFMRMPSSLLTTTRGLTSGMERQTSKELEPFSSKKKQGILWGKGGSKSNYAEAAAGVGALPKAGPRKKMTQKKKPLWDASAVTLGKAFHQWGQRLKSAPAEPATFPPISGVGLPGRSNKCSLLPLRPKQCKNFYTGKRSGAKRTKELQLVAKEDTDSTRDPGSQVQFPTCRAEPPCQSVHQEFSSGDINTRSLQDPGNSQSSGLSQRGILSKKSTPSGDQEEPVGPPAPDSEILQLHGTQGCPRCPELQKEIEDLRKQLSALQAVGEKFQTHST</sequence>
<reference key="1">
    <citation type="journal article" date="2004" name="Genome Res.">
        <title>The status, quality, and expansion of the NIH full-length cDNA project: the Mammalian Gene Collection (MGC).</title>
        <authorList>
            <consortium name="The MGC Project Team"/>
        </authorList>
    </citation>
    <scope>NUCLEOTIDE SEQUENCE [LARGE SCALE MRNA]</scope>
    <source>
        <tissue>Testis</tissue>
    </source>
</reference>
<reference key="2">
    <citation type="journal article" date="2012" name="Nat. Commun.">
        <title>Quantitative maps of protein phosphorylation sites across 14 different rat organs and tissues.</title>
        <authorList>
            <person name="Lundby A."/>
            <person name="Secher A."/>
            <person name="Lage K."/>
            <person name="Nordsborg N.B."/>
            <person name="Dmytriyev A."/>
            <person name="Lundby C."/>
            <person name="Olsen J.V."/>
        </authorList>
    </citation>
    <scope>PHOSPHORYLATION [LARGE SCALE ANALYSIS] AT SER-43</scope>
    <scope>IDENTIFICATION BY MASS SPECTROMETRY [LARGE SCALE ANALYSIS]</scope>
</reference>
<comment type="sequence caution" evidence="3">
    <conflict type="erroneous initiation">
        <sequence resource="EMBL-CDS" id="AAI05881"/>
    </conflict>
</comment>
<feature type="chain" id="PRO_0000343897" description="Uncharacterized protein CXorf49 homolog">
    <location>
        <begin position="1"/>
        <end position="510"/>
    </location>
</feature>
<feature type="region of interest" description="Disordered" evidence="2">
    <location>
        <begin position="1"/>
        <end position="154"/>
    </location>
</feature>
<feature type="region of interest" description="Disordered" evidence="2">
    <location>
        <begin position="208"/>
        <end position="227"/>
    </location>
</feature>
<feature type="region of interest" description="Disordered" evidence="2">
    <location>
        <begin position="234"/>
        <end position="276"/>
    </location>
</feature>
<feature type="region of interest" description="Disordered" evidence="2">
    <location>
        <begin position="368"/>
        <end position="480"/>
    </location>
</feature>
<feature type="compositionally biased region" description="Polar residues" evidence="2">
    <location>
        <begin position="50"/>
        <end position="60"/>
    </location>
</feature>
<feature type="compositionally biased region" description="Basic and acidic residues" evidence="2">
    <location>
        <begin position="78"/>
        <end position="92"/>
    </location>
</feature>
<feature type="compositionally biased region" description="Polar residues" evidence="2">
    <location>
        <begin position="97"/>
        <end position="109"/>
    </location>
</feature>
<feature type="compositionally biased region" description="Polar residues" evidence="2">
    <location>
        <begin position="118"/>
        <end position="135"/>
    </location>
</feature>
<feature type="compositionally biased region" description="Low complexity" evidence="2">
    <location>
        <begin position="139"/>
        <end position="151"/>
    </location>
</feature>
<feature type="compositionally biased region" description="Low complexity" evidence="2">
    <location>
        <begin position="243"/>
        <end position="255"/>
    </location>
</feature>
<feature type="compositionally biased region" description="Basic and acidic residues" evidence="2">
    <location>
        <begin position="379"/>
        <end position="395"/>
    </location>
</feature>
<feature type="compositionally biased region" description="Polar residues" evidence="2">
    <location>
        <begin position="414"/>
        <end position="441"/>
    </location>
</feature>
<feature type="modified residue" description="Phosphoserine" evidence="4">
    <location>
        <position position="43"/>
    </location>
</feature>
<feature type="modified residue" description="Phosphoserine" evidence="1">
    <location>
        <position position="84"/>
    </location>
</feature>
<feature type="modified residue" description="Phosphoserine" evidence="1">
    <location>
        <position position="120"/>
    </location>
</feature>
<proteinExistence type="evidence at protein level"/>
<accession>Q3KR64</accession>
<protein>
    <recommendedName>
        <fullName>Uncharacterized protein CXorf49 homolog</fullName>
    </recommendedName>
</protein>
<evidence type="ECO:0000250" key="1">
    <source>
        <dbReference type="UniProtKB" id="Q9D454"/>
    </source>
</evidence>
<evidence type="ECO:0000256" key="2">
    <source>
        <dbReference type="SAM" id="MobiDB-lite"/>
    </source>
</evidence>
<evidence type="ECO:0000305" key="3"/>
<evidence type="ECO:0007744" key="4">
    <source>
    </source>
</evidence>
<keyword id="KW-0597">Phosphoprotein</keyword>
<keyword id="KW-1185">Reference proteome</keyword>